<evidence type="ECO:0000250" key="1">
    <source>
        <dbReference type="UniProtKB" id="O00712"/>
    </source>
</evidence>
<evidence type="ECO:0000255" key="2">
    <source>
        <dbReference type="PROSITE-ProRule" id="PRU00436"/>
    </source>
</evidence>
<evidence type="ECO:0000256" key="3">
    <source>
        <dbReference type="SAM" id="MobiDB-lite"/>
    </source>
</evidence>
<evidence type="ECO:0000269" key="4">
    <source>
    </source>
</evidence>
<evidence type="ECO:0000269" key="5">
    <source>
    </source>
</evidence>
<evidence type="ECO:0000303" key="6">
    <source>
    </source>
</evidence>
<evidence type="ECO:0000305" key="7"/>
<evidence type="ECO:0007744" key="8">
    <source>
    </source>
</evidence>
<evidence type="ECO:0007744" key="9">
    <source>
    </source>
</evidence>
<evidence type="ECO:0007744" key="10">
    <source>
    </source>
</evidence>
<evidence type="ECO:0007744" key="11">
    <source>
    </source>
</evidence>
<comment type="function">
    <text evidence="4 5">Transcriptional activator of GFAP, essential for proper brain development (PubMed:15632069, PubMed:30388402). Recognizes and binds the palindromic sequence 5'-TTGGCNNNNNGCCAA-3' present in viral and cellular promoters and in the origin of replication of adenovirus type 2. These proteins are individually capable of activating transcription and replication (PubMed:30388402).</text>
</comment>
<comment type="subunit">
    <text>Binds DNA as a homodimer.</text>
</comment>
<comment type="subcellular location">
    <subcellularLocation>
        <location>Nucleus</location>
    </subcellularLocation>
</comment>
<comment type="alternative products">
    <event type="alternative splicing"/>
    <isoform>
        <id>P97863-1</id>
        <name>1</name>
        <sequence type="displayed"/>
    </isoform>
    <isoform>
        <id>P97863-2</id>
        <name>2</name>
        <sequence type="described" ref="VSP_003547"/>
    </isoform>
    <isoform>
        <id>P97863-3</id>
        <name>3</name>
        <sequence type="described" ref="VSP_003548 VSP_003549"/>
    </isoform>
</comment>
<comment type="tissue specificity">
    <text>Highest expression in lung, skeletal muscle and heart. Lower levels in liver, kidney and brain. Very low levels in testis and spleen.</text>
</comment>
<comment type="domain">
    <text evidence="1">The 9aaTAD motif is a transactivation domain present in a large number of yeast and animal transcription factors.</text>
</comment>
<comment type="disruption phenotype">
    <text evidence="4 5">NFIB knockout results in failure of lung maturation, and severe defects in development of the corpus callosum, specific midline glial populations, the hippocampus and the pons. GFAP expression is reduced in brains of NFIB-null mice (PubMed:15632069). Conditional NFIB knockdown in the telencephalon results in significant enlargement of the cerebral cortex with preservation of overall brain structure and inter-hemispheric connectivity (PubMed:30388402).</text>
</comment>
<comment type="similarity">
    <text evidence="2">Belongs to the CTF/NF-I family.</text>
</comment>
<protein>
    <recommendedName>
        <fullName>Nuclear factor 1 B-type</fullName>
        <shortName>NF1-B</shortName>
        <shortName>Nuclear factor 1/B</shortName>
    </recommendedName>
    <alternativeName>
        <fullName>CCAAT-box-binding transcription factor</fullName>
        <shortName>CTF</shortName>
    </alternativeName>
    <alternativeName>
        <fullName>Nuclear factor I/B</fullName>
        <shortName>NF-I/B</shortName>
        <shortName>NFI-B</shortName>
    </alternativeName>
    <alternativeName>
        <fullName>TGGCA-binding protein</fullName>
    </alternativeName>
</protein>
<accession>P97863</accession>
<accession>P70252</accession>
<accession>P70253</accession>
<accession>P70254</accession>
<accession>Q9R1G4</accession>
<reference key="1">
    <citation type="journal article" date="1997" name="Dev. Dyn.">
        <title>Expression patterns of the four nuclear factor I genes during mouse embryogenesis indicate a potential role in development.</title>
        <authorList>
            <person name="Chaudhry A.Z."/>
            <person name="Lyons G.E."/>
            <person name="Gronostajski R.M."/>
        </authorList>
    </citation>
    <scope>NUCLEOTIDE SEQUENCE [MRNA] (ISOFORM 3)</scope>
    <source>
        <strain>BALB/cJ</strain>
        <tissue>Liver</tissue>
        <tissue>Skeletal muscle</tissue>
    </source>
</reference>
<reference key="2">
    <citation type="journal article" date="2003" name="Gene">
        <title>Genomic organization, splice products and mouse chromosomal localization of genes for transcription factor Nuclear Factor One.</title>
        <authorList>
            <person name="Gruender A."/>
            <person name="Qian F."/>
            <person name="Ebel T.T."/>
            <person name="Mincheva A."/>
            <person name="Lichter P."/>
            <person name="Kruse U."/>
            <person name="Sippel A.E."/>
        </authorList>
    </citation>
    <scope>NUCLEOTIDE SEQUENCE (ISOFORMS 1; 2 AND 3)</scope>
    <source>
        <strain>NIH Swiss</strain>
    </source>
</reference>
<reference key="3">
    <citation type="journal article" date="2004" name="Genome Res.">
        <title>The status, quality, and expansion of the NIH full-length cDNA project: the Mammalian Gene Collection (MGC).</title>
        <authorList>
            <consortium name="The MGC Project Team"/>
        </authorList>
    </citation>
    <scope>NUCLEOTIDE SEQUENCE [LARGE SCALE MRNA] (ISOFORM 1)</scope>
</reference>
<reference key="4">
    <citation type="journal article" date="1999" name="Mamm. Genome">
        <title>Exon structure of the nuclear factor I DNA-binding domain from C. elegans to mammals.</title>
        <authorList>
            <person name="Fletcher C.F."/>
            <person name="Jenkins N.A."/>
            <person name="Copeland N.G."/>
            <person name="Chaudhry A.Z."/>
            <person name="Gronostajski R.M."/>
        </authorList>
    </citation>
    <scope>NUCLEOTIDE SEQUENCE [GENOMIC DNA] OF 11-187</scope>
    <source>
        <strain>129</strain>
    </source>
</reference>
<reference key="5">
    <citation type="journal article" date="2004" name="Mol. Cell. Proteomics">
        <title>Phosphoproteomic analysis of the developing mouse brain.</title>
        <authorList>
            <person name="Ballif B.A."/>
            <person name="Villen J."/>
            <person name="Beausoleil S.A."/>
            <person name="Schwartz D."/>
            <person name="Gygi S.P."/>
        </authorList>
    </citation>
    <scope>PHOSPHORYLATION [LARGE SCALE ANALYSIS] AT SER-295</scope>
    <scope>IDENTIFICATION BY MASS SPECTROMETRY [LARGE SCALE ANALYSIS]</scope>
    <source>
        <tissue>Embryonic brain</tissue>
    </source>
</reference>
<reference key="6">
    <citation type="journal article" date="2005" name="Mol. Cell. Biol.">
        <title>The transcription factor gene Nfib is essential for both lung maturation and brain development.</title>
        <authorList>
            <person name="Steele-Perkins G."/>
            <person name="Plachez C."/>
            <person name="Butz K.G."/>
            <person name="Yang G."/>
            <person name="Bachurski C.J."/>
            <person name="Kinsman S.L."/>
            <person name="Litwack E.D."/>
            <person name="Richards L.J."/>
            <person name="Gronostajski R.M."/>
        </authorList>
    </citation>
    <scope>FUNCTION</scope>
    <scope>DISRUPTION PHENOTYPE</scope>
</reference>
<reference key="7">
    <citation type="journal article" date="2007" name="Proc. Natl. Acad. Sci. U.S.A.">
        <title>Large-scale phosphorylation analysis of mouse liver.</title>
        <authorList>
            <person name="Villen J."/>
            <person name="Beausoleil S.A."/>
            <person name="Gerber S.A."/>
            <person name="Gygi S.P."/>
        </authorList>
    </citation>
    <scope>PHOSPHORYLATION [LARGE SCALE ANALYSIS] AT SER-292 AND SER-295</scope>
    <scope>IDENTIFICATION BY MASS SPECTROMETRY [LARGE SCALE ANALYSIS]</scope>
    <source>
        <tissue>Liver</tissue>
    </source>
</reference>
<reference key="8">
    <citation type="journal article" date="2010" name="Cell">
        <title>A tissue-specific atlas of mouse protein phosphorylation and expression.</title>
        <authorList>
            <person name="Huttlin E.L."/>
            <person name="Jedrychowski M.P."/>
            <person name="Elias J.E."/>
            <person name="Goswami T."/>
            <person name="Rad R."/>
            <person name="Beausoleil S.A."/>
            <person name="Villen J."/>
            <person name="Haas W."/>
            <person name="Sowa M.E."/>
            <person name="Gygi S.P."/>
        </authorList>
    </citation>
    <scope>PHOSPHORYLATION [LARGE SCALE ANALYSIS] AT THR-286; SER-292; SER-295 AND SER-312</scope>
    <scope>IDENTIFICATION BY MASS SPECTROMETRY [LARGE SCALE ANALYSIS]</scope>
    <source>
        <tissue>Brain</tissue>
        <tissue>Brown adipose tissue</tissue>
        <tissue>Heart</tissue>
        <tissue>Kidney</tissue>
        <tissue>Liver</tissue>
        <tissue>Lung</tissue>
        <tissue>Pancreas</tissue>
        <tissue>Spleen</tissue>
        <tissue>Testis</tissue>
    </source>
</reference>
<reference key="9">
    <citation type="journal article" date="2013" name="Mol. Cell">
        <title>SIRT5-mediated lysine desuccinylation impacts diverse metabolic pathways.</title>
        <authorList>
            <person name="Park J."/>
            <person name="Chen Y."/>
            <person name="Tishkoff D.X."/>
            <person name="Peng C."/>
            <person name="Tan M."/>
            <person name="Dai L."/>
            <person name="Xie Z."/>
            <person name="Zhang Y."/>
            <person name="Zwaans B.M."/>
            <person name="Skinner M.E."/>
            <person name="Lombard D.B."/>
            <person name="Zhao Y."/>
        </authorList>
    </citation>
    <scope>IDENTIFICATION BY MASS SPECTROMETRY [LARGE SCALE ANALYSIS]</scope>
    <source>
        <tissue>Embryonic fibroblast</tissue>
    </source>
</reference>
<reference key="10">
    <citation type="journal article" date="2014" name="Mol. Cell. Proteomics">
        <title>Immunoaffinity enrichment and mass spectrometry analysis of protein methylation.</title>
        <authorList>
            <person name="Guo A."/>
            <person name="Gu H."/>
            <person name="Zhou J."/>
            <person name="Mulhern D."/>
            <person name="Wang Y."/>
            <person name="Lee K.A."/>
            <person name="Yang V."/>
            <person name="Aguiar M."/>
            <person name="Kornhauser J."/>
            <person name="Jia X."/>
            <person name="Ren J."/>
            <person name="Beausoleil S.A."/>
            <person name="Silva J.C."/>
            <person name="Vemulapalli V."/>
            <person name="Bedford M.T."/>
            <person name="Comb M.J."/>
        </authorList>
    </citation>
    <scope>METHYLATION [LARGE SCALE ANALYSIS] AT ARG-335 AND ARG-388</scope>
    <scope>IDENTIFICATION BY MASS SPECTROMETRY [LARGE SCALE ANALYSIS]</scope>
    <source>
        <tissue>Embryo</tissue>
    </source>
</reference>
<reference key="11">
    <citation type="journal article" date="2018" name="Am. J. Hum. Genet.">
        <title>NFIB haploinsufficiency is associated with intellectual disability and macrocephaly.</title>
        <authorList>
            <person name="Schanze I."/>
            <person name="Bunt J."/>
            <person name="Lim J.W.C."/>
            <person name="Schanze D."/>
            <person name="Dean R.J."/>
            <person name="Alders M."/>
            <person name="Blanchet P."/>
            <person name="Attie-Bitach T."/>
            <person name="Berland S."/>
            <person name="Boogert S."/>
            <person name="Boppudi S."/>
            <person name="Bridges C.J."/>
            <person name="Cho M.T."/>
            <person name="Dobyns W.B."/>
            <person name="Donnai D."/>
            <person name="Douglas J."/>
            <person name="Earl D.L."/>
            <person name="Edwards T.J."/>
            <person name="Faivre L."/>
            <person name="Fregeau B."/>
            <person name="Genevieve D."/>
            <person name="Gerard M."/>
            <person name="Gatinois V."/>
            <person name="Holder-Espinasse M."/>
            <person name="Huth S.F."/>
            <person name="Izumi K."/>
            <person name="Kerr B."/>
            <person name="Lacaze E."/>
            <person name="Lakeman P."/>
            <person name="Mahida S."/>
            <person name="Mirzaa G.M."/>
            <person name="Morgan S.M."/>
            <person name="Nowak C."/>
            <person name="Peeters H."/>
            <person name="Petit F."/>
            <person name="Pilz D.T."/>
            <person name="Puechberty J."/>
            <person name="Reinstein E."/>
            <person name="Riviere J.B."/>
            <person name="Santani A.B."/>
            <person name="Schneider A."/>
            <person name="Sherr E.H."/>
            <person name="Smith-Hicks C."/>
            <person name="Wieland I."/>
            <person name="Zackai E."/>
            <person name="Zhao X."/>
            <person name="Gronostajski R.M."/>
            <person name="Zenker M."/>
            <person name="Richards L.J."/>
        </authorList>
    </citation>
    <scope>FUNCTION</scope>
    <scope>DISRUPTION PHENOTYPE</scope>
</reference>
<name>NFIB_MOUSE</name>
<keyword id="KW-0010">Activator</keyword>
<keyword id="KW-0025">Alternative splicing</keyword>
<keyword id="KW-0235">DNA replication</keyword>
<keyword id="KW-0238">DNA-binding</keyword>
<keyword id="KW-0488">Methylation</keyword>
<keyword id="KW-0539">Nucleus</keyword>
<keyword id="KW-0597">Phosphoprotein</keyword>
<keyword id="KW-1185">Reference proteome</keyword>
<keyword id="KW-0804">Transcription</keyword>
<keyword id="KW-0805">Transcription regulation</keyword>
<proteinExistence type="evidence at protein level"/>
<organism>
    <name type="scientific">Mus musculus</name>
    <name type="common">Mouse</name>
    <dbReference type="NCBI Taxonomy" id="10090"/>
    <lineage>
        <taxon>Eukaryota</taxon>
        <taxon>Metazoa</taxon>
        <taxon>Chordata</taxon>
        <taxon>Craniata</taxon>
        <taxon>Vertebrata</taxon>
        <taxon>Euteleostomi</taxon>
        <taxon>Mammalia</taxon>
        <taxon>Eutheria</taxon>
        <taxon>Euarchontoglires</taxon>
        <taxon>Glires</taxon>
        <taxon>Rodentia</taxon>
        <taxon>Myomorpha</taxon>
        <taxon>Muroidea</taxon>
        <taxon>Muridae</taxon>
        <taxon>Murinae</taxon>
        <taxon>Mus</taxon>
        <taxon>Mus</taxon>
    </lineage>
</organism>
<gene>
    <name type="primary">Nfib</name>
</gene>
<sequence length="570" mass="63507">MMYSPICLTQDEFHPFIEALLPHVRAIAYTWFNLQARKRKYFKKHEKRMSKDEERAVKDELLSEKPEIKQKWASRLLAKLRKDIRQEYREDFVLTVTGKKHPCCVLSNPDQKGKIRRIDCLRQADKVWRLDLVMVILFKGIPLESTDGERLMKSPHCTNPALCVQPHHITVSVKELDLFLAYYVQEQDSGQSGSPSHSDPAKNPPGYLEDSFVKSGVFNVSELVRVSRTPITQGTGVNFPIGEIPSQPYYHDMNSGVNLQRSLSSPPSSKRPKTISIDENMEPSPTGDFYPSPNSPAAGSRTWHERDQDMSSPTTMKKPEKPLFSSTSPQDSSPRLSTFPQHHHPGIPGVAHSVISTRTPPPPSPLPFPTQAILPPAPSSYFSHPTIRYPPHLNPQDTLKNYVPSYDPSSPQTSQPNSSGQVVGKVPGHFTPVLAPSPHPSAVRPVTLTMTDTKPITTSTEGEAASPTATTYTASGTSQANRYVGLSPRDPSFLHQQQLRICDWTMNQNGRHLYPSTSEDTLGITWQSPGTWASLVPFQVSNRTPILPANVQNYGLNIIGEPFLQAETSN</sequence>
<feature type="chain" id="PRO_0000100197" description="Nuclear factor 1 B-type">
    <location>
        <begin position="1"/>
        <end position="570"/>
    </location>
</feature>
<feature type="DNA-binding region" description="CTF/NF-I" evidence="2">
    <location>
        <begin position="1"/>
        <end position="195"/>
    </location>
</feature>
<feature type="region of interest" description="Disordered" evidence="3">
    <location>
        <begin position="252"/>
        <end position="446"/>
    </location>
</feature>
<feature type="region of interest" description="Disordered" evidence="3">
    <location>
        <begin position="455"/>
        <end position="474"/>
    </location>
</feature>
<feature type="short sequence motif" description="9aaTAD" evidence="1">
    <location>
        <begin position="397"/>
        <end position="405"/>
    </location>
</feature>
<feature type="compositionally biased region" description="Polar residues" evidence="3">
    <location>
        <begin position="324"/>
        <end position="340"/>
    </location>
</feature>
<feature type="compositionally biased region" description="Pro residues" evidence="3">
    <location>
        <begin position="359"/>
        <end position="368"/>
    </location>
</feature>
<feature type="compositionally biased region" description="Low complexity" evidence="3">
    <location>
        <begin position="408"/>
        <end position="421"/>
    </location>
</feature>
<feature type="compositionally biased region" description="Low complexity" evidence="3">
    <location>
        <begin position="464"/>
        <end position="474"/>
    </location>
</feature>
<feature type="modified residue" description="Phosphoserine" evidence="1">
    <location>
        <position position="264"/>
    </location>
</feature>
<feature type="modified residue" description="Phosphothreonine" evidence="10">
    <location>
        <position position="286"/>
    </location>
</feature>
<feature type="modified residue" description="Phosphoserine" evidence="9 10">
    <location>
        <position position="292"/>
    </location>
</feature>
<feature type="modified residue" description="Phosphoserine" evidence="8 9 10">
    <location>
        <position position="295"/>
    </location>
</feature>
<feature type="modified residue" description="Phosphoserine" evidence="10">
    <location>
        <position position="312"/>
    </location>
</feature>
<feature type="modified residue" description="Phosphoserine" evidence="1">
    <location>
        <position position="328"/>
    </location>
</feature>
<feature type="modified residue" description="Phosphoserine" evidence="1">
    <location>
        <position position="333"/>
    </location>
</feature>
<feature type="modified residue" description="Asymmetric dimethylarginine" evidence="11">
    <location>
        <position position="335"/>
    </location>
</feature>
<feature type="modified residue" description="Asymmetric dimethylarginine" evidence="11">
    <location>
        <position position="388"/>
    </location>
</feature>
<feature type="splice variant" id="VSP_003547" description="In isoform 2." evidence="7">
    <location>
        <begin position="416"/>
        <end position="498"/>
    </location>
</feature>
<feature type="splice variant" id="VSP_003548" description="In isoform 3." evidence="6">
    <original>PNSSG</original>
    <variation>SWYLG</variation>
    <location>
        <begin position="416"/>
        <end position="420"/>
    </location>
</feature>
<feature type="splice variant" id="VSP_003549" description="In isoform 3." evidence="6">
    <location>
        <begin position="421"/>
        <end position="570"/>
    </location>
</feature>
<feature type="sequence variant" description="In strain: NIH Swiss.">
    <original>D</original>
    <variation>G</variation>
    <location>
        <position position="131"/>
    </location>
</feature>
<dbReference type="EMBL" id="U57634">
    <property type="protein sequence ID" value="AAB49929.1"/>
    <property type="molecule type" value="mRNA"/>
</dbReference>
<dbReference type="EMBL" id="Y07685">
    <property type="protein sequence ID" value="CAA68949.1"/>
    <property type="molecule type" value="mRNA"/>
</dbReference>
<dbReference type="EMBL" id="Y07686">
    <property type="protein sequence ID" value="CAA68950.1"/>
    <property type="molecule type" value="mRNA"/>
</dbReference>
<dbReference type="EMBL" id="Y07687">
    <property type="protein sequence ID" value="CAA68951.1"/>
    <property type="molecule type" value="mRNA"/>
</dbReference>
<dbReference type="EMBL" id="BC014290">
    <property type="protein sequence ID" value="AAH14290.1"/>
    <property type="molecule type" value="mRNA"/>
</dbReference>
<dbReference type="EMBL" id="AF111264">
    <property type="protein sequence ID" value="AAD39099.1"/>
    <property type="molecule type" value="Genomic_DNA"/>
</dbReference>
<dbReference type="CCDS" id="CCDS38790.1">
    <molecule id="P97863-3"/>
</dbReference>
<dbReference type="CCDS" id="CCDS51213.1">
    <molecule id="P97863-1"/>
</dbReference>
<dbReference type="RefSeq" id="NP_001106680.1">
    <molecule id="P97863-1"/>
    <property type="nucleotide sequence ID" value="NM_001113209.3"/>
</dbReference>
<dbReference type="RefSeq" id="NP_001273060.1">
    <molecule id="P97863-2"/>
    <property type="nucleotide sequence ID" value="NM_001286131.2"/>
</dbReference>
<dbReference type="RefSeq" id="NP_032713.3">
    <molecule id="P97863-3"/>
    <property type="nucleotide sequence ID" value="NM_008687.6"/>
</dbReference>
<dbReference type="SMR" id="P97863"/>
<dbReference type="BioGRID" id="201747">
    <property type="interactions" value="4"/>
</dbReference>
<dbReference type="FunCoup" id="P97863">
    <property type="interactions" value="1611"/>
</dbReference>
<dbReference type="IntAct" id="P97863">
    <property type="interactions" value="2"/>
</dbReference>
<dbReference type="MINT" id="P97863"/>
<dbReference type="STRING" id="10090.ENSMUSP00000052863"/>
<dbReference type="iPTMnet" id="P97863"/>
<dbReference type="PhosphoSitePlus" id="P97863"/>
<dbReference type="jPOST" id="P97863"/>
<dbReference type="PaxDb" id="10090-ENSMUSP00000052863"/>
<dbReference type="ProteomicsDB" id="287497">
    <molecule id="P97863-1"/>
</dbReference>
<dbReference type="ProteomicsDB" id="287498">
    <molecule id="P97863-2"/>
</dbReference>
<dbReference type="ProteomicsDB" id="287499">
    <molecule id="P97863-3"/>
</dbReference>
<dbReference type="Pumba" id="P97863"/>
<dbReference type="Antibodypedia" id="1309">
    <property type="antibodies" value="230 antibodies from 30 providers"/>
</dbReference>
<dbReference type="DNASU" id="18028"/>
<dbReference type="Ensembl" id="ENSMUST00000050872.15">
    <molecule id="P97863-1"/>
    <property type="protein sequence ID" value="ENSMUSP00000052863.9"/>
    <property type="gene ID" value="ENSMUSG00000008575.18"/>
</dbReference>
<dbReference type="Ensembl" id="ENSMUST00000064770.9">
    <molecule id="P97863-3"/>
    <property type="protein sequence ID" value="ENSMUSP00000067629.3"/>
    <property type="gene ID" value="ENSMUSG00000008575.18"/>
</dbReference>
<dbReference type="GeneID" id="18028"/>
<dbReference type="KEGG" id="mmu:18028"/>
<dbReference type="UCSC" id="uc008tjz.2">
    <molecule id="P97863-1"/>
    <property type="organism name" value="mouse"/>
</dbReference>
<dbReference type="UCSC" id="uc008tkd.3">
    <molecule id="P97863-2"/>
    <property type="organism name" value="mouse"/>
</dbReference>
<dbReference type="AGR" id="MGI:103188"/>
<dbReference type="CTD" id="4781"/>
<dbReference type="MGI" id="MGI:103188">
    <property type="gene designation" value="Nfib"/>
</dbReference>
<dbReference type="VEuPathDB" id="HostDB:ENSMUSG00000008575"/>
<dbReference type="eggNOG" id="KOG3663">
    <property type="taxonomic scope" value="Eukaryota"/>
</dbReference>
<dbReference type="GeneTree" id="ENSGT00950000182916"/>
<dbReference type="HOGENOM" id="CLU_012576_3_0_1"/>
<dbReference type="InParanoid" id="P97863"/>
<dbReference type="OMA" id="WHERDQX"/>
<dbReference type="OrthoDB" id="10055441at2759"/>
<dbReference type="PhylomeDB" id="P97863"/>
<dbReference type="TreeFam" id="TF313889"/>
<dbReference type="BioGRID-ORCS" id="18028">
    <property type="hits" value="5 hits in 81 CRISPR screens"/>
</dbReference>
<dbReference type="ChiTaRS" id="Nfib">
    <property type="organism name" value="mouse"/>
</dbReference>
<dbReference type="PRO" id="PR:P97863"/>
<dbReference type="Proteomes" id="UP000000589">
    <property type="component" value="Chromosome 4"/>
</dbReference>
<dbReference type="RNAct" id="P97863">
    <property type="molecule type" value="protein"/>
</dbReference>
<dbReference type="Bgee" id="ENSMUSG00000008575">
    <property type="expression patterns" value="Expressed in rostral migratory stream and 287 other cell types or tissues"/>
</dbReference>
<dbReference type="ExpressionAtlas" id="P97863">
    <property type="expression patterns" value="baseline and differential"/>
</dbReference>
<dbReference type="GO" id="GO:0044300">
    <property type="term" value="C:cerebellar mossy fiber"/>
    <property type="evidence" value="ECO:0000314"/>
    <property type="project" value="UniProtKB"/>
</dbReference>
<dbReference type="GO" id="GO:0001650">
    <property type="term" value="C:fibrillar center"/>
    <property type="evidence" value="ECO:0007669"/>
    <property type="project" value="Ensembl"/>
</dbReference>
<dbReference type="GO" id="GO:0005654">
    <property type="term" value="C:nucleoplasm"/>
    <property type="evidence" value="ECO:0007669"/>
    <property type="project" value="Ensembl"/>
</dbReference>
<dbReference type="GO" id="GO:0005634">
    <property type="term" value="C:nucleus"/>
    <property type="evidence" value="ECO:0000314"/>
    <property type="project" value="UniProtKB"/>
</dbReference>
<dbReference type="GO" id="GO:0003677">
    <property type="term" value="F:DNA binding"/>
    <property type="evidence" value="ECO:0000250"/>
    <property type="project" value="UniProtKB"/>
</dbReference>
<dbReference type="GO" id="GO:0001228">
    <property type="term" value="F:DNA-binding transcription activator activity, RNA polymerase II-specific"/>
    <property type="evidence" value="ECO:0000314"/>
    <property type="project" value="UniProtKB"/>
</dbReference>
<dbReference type="GO" id="GO:0000981">
    <property type="term" value="F:DNA-binding transcription factor activity, RNA polymerase II-specific"/>
    <property type="evidence" value="ECO:0000250"/>
    <property type="project" value="UniProtKB"/>
</dbReference>
<dbReference type="GO" id="GO:0000978">
    <property type="term" value="F:RNA polymerase II cis-regulatory region sequence-specific DNA binding"/>
    <property type="evidence" value="ECO:0000314"/>
    <property type="project" value="MGI"/>
</dbReference>
<dbReference type="GO" id="GO:0021960">
    <property type="term" value="P:anterior commissure morphogenesis"/>
    <property type="evidence" value="ECO:0000315"/>
    <property type="project" value="UniProtKB"/>
</dbReference>
<dbReference type="GO" id="GO:0060689">
    <property type="term" value="P:cell differentiation involved in salivary gland development"/>
    <property type="evidence" value="ECO:0000315"/>
    <property type="project" value="MGI"/>
</dbReference>
<dbReference type="GO" id="GO:0008283">
    <property type="term" value="P:cell population proliferation"/>
    <property type="evidence" value="ECO:0000315"/>
    <property type="project" value="MGI"/>
</dbReference>
<dbReference type="GO" id="GO:0021846">
    <property type="term" value="P:cell proliferation in forebrain"/>
    <property type="evidence" value="ECO:0000315"/>
    <property type="project" value="MGI"/>
</dbReference>
<dbReference type="GO" id="GO:0002062">
    <property type="term" value="P:chondrocyte differentiation"/>
    <property type="evidence" value="ECO:0000315"/>
    <property type="project" value="UniProtKB"/>
</dbReference>
<dbReference type="GO" id="GO:0060486">
    <property type="term" value="P:club cell differentiation"/>
    <property type="evidence" value="ECO:0000315"/>
    <property type="project" value="UniProtKB"/>
</dbReference>
<dbReference type="GO" id="GO:0071679">
    <property type="term" value="P:commissural neuron axon guidance"/>
    <property type="evidence" value="ECO:0000315"/>
    <property type="project" value="UniProtKB"/>
</dbReference>
<dbReference type="GO" id="GO:0006260">
    <property type="term" value="P:DNA replication"/>
    <property type="evidence" value="ECO:0007669"/>
    <property type="project" value="UniProtKB-KW"/>
</dbReference>
<dbReference type="GO" id="GO:0010458">
    <property type="term" value="P:exit from mitosis"/>
    <property type="evidence" value="ECO:0000315"/>
    <property type="project" value="MGI"/>
</dbReference>
<dbReference type="GO" id="GO:0030900">
    <property type="term" value="P:forebrain development"/>
    <property type="evidence" value="ECO:0000315"/>
    <property type="project" value="MGI"/>
</dbReference>
<dbReference type="GO" id="GO:0010467">
    <property type="term" value="P:gene expression"/>
    <property type="evidence" value="ECO:0000315"/>
    <property type="project" value="MGI"/>
</dbReference>
<dbReference type="GO" id="GO:0048699">
    <property type="term" value="P:generation of neurons"/>
    <property type="evidence" value="ECO:0000315"/>
    <property type="project" value="MGI"/>
</dbReference>
<dbReference type="GO" id="GO:0002067">
    <property type="term" value="P:glandular epithelial cell differentiation"/>
    <property type="evidence" value="ECO:0000315"/>
    <property type="project" value="MGI"/>
</dbReference>
<dbReference type="GO" id="GO:0010001">
    <property type="term" value="P:glial cell differentiation"/>
    <property type="evidence" value="ECO:0000315"/>
    <property type="project" value="UniProtKB"/>
</dbReference>
<dbReference type="GO" id="GO:0021780">
    <property type="term" value="P:glial cell fate specification"/>
    <property type="evidence" value="ECO:0000315"/>
    <property type="project" value="MGI"/>
</dbReference>
<dbReference type="GO" id="GO:0014009">
    <property type="term" value="P:glial cell proliferation"/>
    <property type="evidence" value="ECO:0000315"/>
    <property type="project" value="MGI"/>
</dbReference>
<dbReference type="GO" id="GO:0030902">
    <property type="term" value="P:hindbrain development"/>
    <property type="evidence" value="ECO:0000315"/>
    <property type="project" value="MGI"/>
</dbReference>
<dbReference type="GO" id="GO:0061141">
    <property type="term" value="P:lung ciliated cell differentiation"/>
    <property type="evidence" value="ECO:0000315"/>
    <property type="project" value="UniProtKB"/>
</dbReference>
<dbReference type="GO" id="GO:0030324">
    <property type="term" value="P:lung development"/>
    <property type="evidence" value="ECO:0000315"/>
    <property type="project" value="MGI"/>
</dbReference>
<dbReference type="GO" id="GO:2000795">
    <property type="term" value="P:negative regulation of epithelial cell proliferation involved in lung morphogenesis"/>
    <property type="evidence" value="ECO:0000315"/>
    <property type="project" value="UniProtKB"/>
</dbReference>
<dbReference type="GO" id="GO:2000791">
    <property type="term" value="P:negative regulation of mesenchymal cell proliferation involved in lung development"/>
    <property type="evidence" value="ECO:0000315"/>
    <property type="project" value="UniProtKB"/>
</dbReference>
<dbReference type="GO" id="GO:1902894">
    <property type="term" value="P:negative regulation of miRNA transcription"/>
    <property type="evidence" value="ECO:0007669"/>
    <property type="project" value="Ensembl"/>
</dbReference>
<dbReference type="GO" id="GO:2000647">
    <property type="term" value="P:negative regulation of stem cell proliferation"/>
    <property type="evidence" value="ECO:0000315"/>
    <property type="project" value="MGI"/>
</dbReference>
<dbReference type="GO" id="GO:0061351">
    <property type="term" value="P:neural precursor cell proliferation"/>
    <property type="evidence" value="ECO:0000315"/>
    <property type="project" value="MGI"/>
</dbReference>
<dbReference type="GO" id="GO:0022008">
    <property type="term" value="P:neurogenesis"/>
    <property type="evidence" value="ECO:0000315"/>
    <property type="project" value="MGI"/>
</dbReference>
<dbReference type="GO" id="GO:0048665">
    <property type="term" value="P:neuron fate specification"/>
    <property type="evidence" value="ECO:0000315"/>
    <property type="project" value="MGI"/>
</dbReference>
<dbReference type="GO" id="GO:0045944">
    <property type="term" value="P:positive regulation of transcription by RNA polymerase II"/>
    <property type="evidence" value="ECO:0000314"/>
    <property type="project" value="UniProtKB"/>
</dbReference>
<dbReference type="GO" id="GO:0021740">
    <property type="term" value="P:principal sensory nucleus of trigeminal nerve development"/>
    <property type="evidence" value="ECO:0000315"/>
    <property type="project" value="UniProtKB"/>
</dbReference>
<dbReference type="GO" id="GO:0031099">
    <property type="term" value="P:regeneration"/>
    <property type="evidence" value="ECO:0000315"/>
    <property type="project" value="MGI"/>
</dbReference>
<dbReference type="GO" id="GO:0009617">
    <property type="term" value="P:response to bacterium"/>
    <property type="evidence" value="ECO:0000270"/>
    <property type="project" value="MGI"/>
</dbReference>
<dbReference type="GO" id="GO:0009611">
    <property type="term" value="P:response to wounding"/>
    <property type="evidence" value="ECO:0000315"/>
    <property type="project" value="MGI"/>
</dbReference>
<dbReference type="GO" id="GO:0060041">
    <property type="term" value="P:retina development in camera-type eye"/>
    <property type="evidence" value="ECO:0000315"/>
    <property type="project" value="MGI"/>
</dbReference>
<dbReference type="GO" id="GO:0060662">
    <property type="term" value="P:salivary gland cavitation"/>
    <property type="evidence" value="ECO:0000315"/>
    <property type="project" value="MGI"/>
</dbReference>
<dbReference type="GO" id="GO:0019827">
    <property type="term" value="P:stem cell population maintenance"/>
    <property type="evidence" value="ECO:0000315"/>
    <property type="project" value="MGI"/>
</dbReference>
<dbReference type="GO" id="GO:0072089">
    <property type="term" value="P:stem cell proliferation"/>
    <property type="evidence" value="ECO:0000315"/>
    <property type="project" value="MGI"/>
</dbReference>
<dbReference type="GO" id="GO:0001894">
    <property type="term" value="P:tissue homeostasis"/>
    <property type="evidence" value="ECO:0000315"/>
    <property type="project" value="MGI"/>
</dbReference>
<dbReference type="GO" id="GO:0060509">
    <property type="term" value="P:type I pneumocyte differentiation"/>
    <property type="evidence" value="ECO:0000315"/>
    <property type="project" value="UniProtKB"/>
</dbReference>
<dbReference type="GO" id="GO:0060510">
    <property type="term" value="P:type II pneumocyte differentiation"/>
    <property type="evidence" value="ECO:0000315"/>
    <property type="project" value="UniProtKB"/>
</dbReference>
<dbReference type="InterPro" id="IPR000647">
    <property type="entry name" value="CTF/NFI"/>
</dbReference>
<dbReference type="InterPro" id="IPR020604">
    <property type="entry name" value="CTF/NFI_DNA-bd-dom"/>
</dbReference>
<dbReference type="InterPro" id="IPR019739">
    <property type="entry name" value="CTF/NFI_DNA-bd_CS"/>
</dbReference>
<dbReference type="InterPro" id="IPR019548">
    <property type="entry name" value="CTF/NFI_DNA-bd_N"/>
</dbReference>
<dbReference type="InterPro" id="IPR003619">
    <property type="entry name" value="MAD_homology1_Dwarfin-type"/>
</dbReference>
<dbReference type="PANTHER" id="PTHR11492:SF4">
    <property type="entry name" value="NUCLEAR FACTOR 1 B-TYPE"/>
    <property type="match status" value="1"/>
</dbReference>
<dbReference type="PANTHER" id="PTHR11492">
    <property type="entry name" value="NUCLEAR FACTOR I"/>
    <property type="match status" value="1"/>
</dbReference>
<dbReference type="Pfam" id="PF00859">
    <property type="entry name" value="CTF_NFI"/>
    <property type="match status" value="1"/>
</dbReference>
<dbReference type="Pfam" id="PF03165">
    <property type="entry name" value="MH1"/>
    <property type="match status" value="1"/>
</dbReference>
<dbReference type="Pfam" id="PF10524">
    <property type="entry name" value="NfI_DNAbd_pre-N"/>
    <property type="match status" value="1"/>
</dbReference>
<dbReference type="SMART" id="SM00523">
    <property type="entry name" value="DWA"/>
    <property type="match status" value="1"/>
</dbReference>
<dbReference type="PROSITE" id="PS00349">
    <property type="entry name" value="CTF_NFI_1"/>
    <property type="match status" value="1"/>
</dbReference>
<dbReference type="PROSITE" id="PS51080">
    <property type="entry name" value="CTF_NFI_2"/>
    <property type="match status" value="1"/>
</dbReference>